<organism>
    <name type="scientific">Vigna radiata var. radiata</name>
    <name type="common">Mung bean</name>
    <name type="synonym">Phaseolus aureus</name>
    <dbReference type="NCBI Taxonomy" id="3916"/>
    <lineage>
        <taxon>Eukaryota</taxon>
        <taxon>Viridiplantae</taxon>
        <taxon>Streptophyta</taxon>
        <taxon>Embryophyta</taxon>
        <taxon>Tracheophyta</taxon>
        <taxon>Spermatophyta</taxon>
        <taxon>Magnoliopsida</taxon>
        <taxon>eudicotyledons</taxon>
        <taxon>Gunneridae</taxon>
        <taxon>Pentapetalae</taxon>
        <taxon>rosids</taxon>
        <taxon>fabids</taxon>
        <taxon>Fabales</taxon>
        <taxon>Fabaceae</taxon>
        <taxon>Papilionoideae</taxon>
        <taxon>50 kb inversion clade</taxon>
        <taxon>NPAAA clade</taxon>
        <taxon>indigoferoid/millettioid clade</taxon>
        <taxon>Phaseoleae</taxon>
        <taxon>Vigna</taxon>
    </lineage>
</organism>
<proteinExistence type="evidence at protein level"/>
<sequence>MASNSDLVRAVESFLGVSLGDSVSDSLLLIATTSAAVVVGLLVFLWKKSSDRSKEVKPVVVPRDLMMEEEEEVDVAAGKTKVTIFFGTQTGTAEGFAKALAEEIKARYEKAAVKVVDLDDYAADDDLYEEKLKKESLVFFMLATYGDGEPIDNAARFYKWFTEGKDERGIWLQKLTYGVFGLGNRQYEHFNKIGKVVDEELAEQGAKRLVAVGLGDDDQSIEDDFSAWKESLWSELDQLLRDEDDANTVSTPYTAAILEYRVVIHDPTAASTYDNHSTVANGNTEFDIHHPCRVNVAVQKELHKPESDRSCIHLEFDISGTSITYDTGDHVGVYAENCNETVEETGKLLGQNLDLFFSLHTDKDDGTSLGGSLLPPFPGPCSLRTALARYADLLNPPRKAALLALATHASEPSDERLKFLSSPQGKDEYSKWVVGSQRSLVEVMAEFPSAKPPLGVFFAAIAPRLQPRYYSISSSPRFAPQRVHVTCALVYGPTPTGRIHKGVCSTWMKNAIPSEKSQDCSSAPIFIRPSNFKLPVDHSIPIIMVGPGTGLAPFRGFLQERYALKEDGVQLGPALLFFGCRNRQMDFIYEDELKSFVEQGSLSELIVAFSREGAEKEYVQHKMMDKAAHLWSLISQGGYLYVCGDAKGMARDVHRTLHSIVQEQENVDSTKAEAIVKKLQMDGRYLRDVW</sequence>
<evidence type="ECO:0000255" key="1">
    <source>
        <dbReference type="HAMAP-Rule" id="MF_03212"/>
    </source>
</evidence>
<accession>P37116</accession>
<comment type="function">
    <text evidence="1">This enzyme is required for electron transfer from NADP to cytochrome P450 in microsomes. It can also provide electron transfer to heme oxygenase and cytochrome B5.</text>
</comment>
<comment type="catalytic activity">
    <reaction evidence="1">
        <text>2 oxidized [cytochrome P450] + NADPH = 2 reduced [cytochrome P450] + NADP(+) + H(+)</text>
        <dbReference type="Rhea" id="RHEA:24040"/>
        <dbReference type="Rhea" id="RHEA-COMP:14627"/>
        <dbReference type="Rhea" id="RHEA-COMP:14628"/>
        <dbReference type="ChEBI" id="CHEBI:15378"/>
        <dbReference type="ChEBI" id="CHEBI:55376"/>
        <dbReference type="ChEBI" id="CHEBI:57783"/>
        <dbReference type="ChEBI" id="CHEBI:58349"/>
        <dbReference type="ChEBI" id="CHEBI:60344"/>
        <dbReference type="EC" id="1.6.2.4"/>
    </reaction>
</comment>
<comment type="cofactor">
    <cofactor evidence="1">
        <name>FAD</name>
        <dbReference type="ChEBI" id="CHEBI:57692"/>
    </cofactor>
    <text evidence="1">Binds 1 FAD per monomer.</text>
</comment>
<comment type="cofactor">
    <cofactor evidence="1">
        <name>FMN</name>
        <dbReference type="ChEBI" id="CHEBI:58210"/>
    </cofactor>
    <text evidence="1">Binds 1 FMN per monomer.</text>
</comment>
<comment type="subcellular location">
    <subcellularLocation>
        <location evidence="1">Endoplasmic reticulum membrane</location>
        <topology evidence="1">Single-pass membrane protein</topology>
        <orientation evidence="1">Cytoplasmic side</orientation>
    </subcellularLocation>
</comment>
<comment type="PTM">
    <text>Glycosylated.</text>
</comment>
<comment type="similarity">
    <text evidence="1">Belongs to the NADPH--cytochrome P450 reductase family.</text>
</comment>
<comment type="similarity">
    <text evidence="1">In the N-terminal section; belongs to the flavodoxin family.</text>
</comment>
<comment type="similarity">
    <text evidence="1">In the C-terminal section; belongs to the flavoprotein pyridine nucleotide cytochrome reductase family.</text>
</comment>
<protein>
    <recommendedName>
        <fullName evidence="1">NADPH--cytochrome P450 reductase</fullName>
        <shortName evidence="1">CPR</shortName>
        <shortName evidence="1">P450R</shortName>
        <ecNumber evidence="1">1.6.2.4</ecNumber>
    </recommendedName>
</protein>
<name>NCPR_VIGRR</name>
<feature type="chain" id="PRO_0000167611" description="NADPH--cytochrome P450 reductase">
    <location>
        <begin position="1"/>
        <end position="690"/>
    </location>
</feature>
<feature type="topological domain" description="Lumenal" evidence="1">
    <location>
        <begin position="1"/>
        <end position="25"/>
    </location>
</feature>
<feature type="transmembrane region" description="Helical" evidence="1">
    <location>
        <begin position="26"/>
        <end position="46"/>
    </location>
</feature>
<feature type="topological domain" description="Cytoplasmic" evidence="1">
    <location>
        <begin position="47"/>
        <end position="690"/>
    </location>
</feature>
<feature type="domain" description="Flavodoxin-like" evidence="1">
    <location>
        <begin position="82"/>
        <end position="233"/>
    </location>
</feature>
<feature type="domain" description="FAD-binding FR-type" evidence="1">
    <location>
        <begin position="289"/>
        <end position="535"/>
    </location>
</feature>
<feature type="binding site" evidence="1">
    <location>
        <begin position="88"/>
        <end position="93"/>
    </location>
    <ligand>
        <name>FMN</name>
        <dbReference type="ChEBI" id="CHEBI:58210"/>
    </ligand>
</feature>
<feature type="binding site" evidence="1">
    <location>
        <begin position="143"/>
        <end position="146"/>
    </location>
    <ligand>
        <name>FMN</name>
        <dbReference type="ChEBI" id="CHEBI:58210"/>
    </ligand>
</feature>
<feature type="binding site" evidence="1">
    <location>
        <begin position="182"/>
        <end position="191"/>
    </location>
    <ligand>
        <name>FMN</name>
        <dbReference type="ChEBI" id="CHEBI:58210"/>
    </ligand>
</feature>
<feature type="binding site" evidence="1">
    <location>
        <position position="217"/>
    </location>
    <ligand>
        <name>FMN</name>
        <dbReference type="ChEBI" id="CHEBI:58210"/>
    </ligand>
</feature>
<feature type="binding site" evidence="1">
    <location>
        <position position="309"/>
    </location>
    <ligand>
        <name>NADP(+)</name>
        <dbReference type="ChEBI" id="CHEBI:58349"/>
    </ligand>
</feature>
<feature type="binding site" evidence="1">
    <location>
        <begin position="468"/>
        <end position="471"/>
    </location>
    <ligand>
        <name>FAD</name>
        <dbReference type="ChEBI" id="CHEBI:57692"/>
    </ligand>
</feature>
<feature type="binding site" evidence="1">
    <location>
        <begin position="486"/>
        <end position="488"/>
    </location>
    <ligand>
        <name>FAD</name>
        <dbReference type="ChEBI" id="CHEBI:57692"/>
    </ligand>
</feature>
<feature type="binding site" evidence="1">
    <location>
        <begin position="502"/>
        <end position="505"/>
    </location>
    <ligand>
        <name>FAD</name>
        <dbReference type="ChEBI" id="CHEBI:57692"/>
    </ligand>
</feature>
<feature type="binding site" evidence="1">
    <location>
        <position position="549"/>
    </location>
    <ligand>
        <name>NADP(+)</name>
        <dbReference type="ChEBI" id="CHEBI:58349"/>
    </ligand>
</feature>
<feature type="binding site" evidence="1">
    <location>
        <begin position="610"/>
        <end position="611"/>
    </location>
    <ligand>
        <name>NADP(+)</name>
        <dbReference type="ChEBI" id="CHEBI:58349"/>
    </ligand>
</feature>
<feature type="binding site" evidence="1">
    <location>
        <begin position="616"/>
        <end position="620"/>
    </location>
    <ligand>
        <name>NADP(+)</name>
        <dbReference type="ChEBI" id="CHEBI:58349"/>
    </ligand>
</feature>
<feature type="binding site" evidence="1">
    <location>
        <position position="652"/>
    </location>
    <ligand>
        <name>NADP(+)</name>
        <dbReference type="ChEBI" id="CHEBI:58349"/>
    </ligand>
</feature>
<feature type="binding site" evidence="1">
    <location>
        <position position="690"/>
    </location>
    <ligand>
        <name>FAD</name>
        <dbReference type="ChEBI" id="CHEBI:57692"/>
    </ligand>
</feature>
<keyword id="KW-0903">Direct protein sequencing</keyword>
<keyword id="KW-0256">Endoplasmic reticulum</keyword>
<keyword id="KW-0274">FAD</keyword>
<keyword id="KW-0285">Flavoprotein</keyword>
<keyword id="KW-0288">FMN</keyword>
<keyword id="KW-0325">Glycoprotein</keyword>
<keyword id="KW-0472">Membrane</keyword>
<keyword id="KW-0521">NADP</keyword>
<keyword id="KW-0560">Oxidoreductase</keyword>
<keyword id="KW-1185">Reference proteome</keyword>
<keyword id="KW-0812">Transmembrane</keyword>
<keyword id="KW-1133">Transmembrane helix</keyword>
<reference key="1">
    <citation type="journal article" date="1993" name="Proc. Natl. Acad. Sci. U.S.A.">
        <title>Purification, characterization, and cDNA cloning of an NADPH-cytochrome P450 reductase from mung bean.</title>
        <authorList>
            <person name="Shet M.S."/>
            <person name="Sathasivan K."/>
            <person name="Arlotto M.A."/>
            <person name="Mehdy M.C."/>
            <person name="Estabrook R.W."/>
        </authorList>
    </citation>
    <scope>NUCLEOTIDE SEQUENCE [MRNA]</scope>
    <scope>PARTIAL PROTEIN SEQUENCE</scope>
    <source>
        <strain>cv. Berken</strain>
        <tissue>Seedling</tissue>
    </source>
</reference>
<dbReference type="EC" id="1.6.2.4" evidence="1"/>
<dbReference type="EMBL" id="L07843">
    <property type="protein sequence ID" value="AAA34240.1"/>
    <property type="molecule type" value="mRNA"/>
</dbReference>
<dbReference type="RefSeq" id="NP_001304239.1">
    <property type="nucleotide sequence ID" value="NM_001317310.1"/>
</dbReference>
<dbReference type="SMR" id="P37116"/>
<dbReference type="STRING" id="3916.P37116"/>
<dbReference type="GeneID" id="106762177"/>
<dbReference type="KEGG" id="vra:106762177"/>
<dbReference type="OrthoDB" id="1856718at2759"/>
<dbReference type="Proteomes" id="UP000087766">
    <property type="component" value="Chromosome 5"/>
</dbReference>
<dbReference type="GO" id="GO:0005829">
    <property type="term" value="C:cytosol"/>
    <property type="evidence" value="ECO:0007669"/>
    <property type="project" value="TreeGrafter"/>
</dbReference>
<dbReference type="GO" id="GO:0005789">
    <property type="term" value="C:endoplasmic reticulum membrane"/>
    <property type="evidence" value="ECO:0007669"/>
    <property type="project" value="UniProtKB-SubCell"/>
</dbReference>
<dbReference type="GO" id="GO:0050660">
    <property type="term" value="F:flavin adenine dinucleotide binding"/>
    <property type="evidence" value="ECO:0007669"/>
    <property type="project" value="UniProtKB-UniRule"/>
</dbReference>
<dbReference type="GO" id="GO:0010181">
    <property type="term" value="F:FMN binding"/>
    <property type="evidence" value="ECO:0007669"/>
    <property type="project" value="UniProtKB-UniRule"/>
</dbReference>
<dbReference type="GO" id="GO:0050661">
    <property type="term" value="F:NADP binding"/>
    <property type="evidence" value="ECO:0007669"/>
    <property type="project" value="UniProtKB-UniRule"/>
</dbReference>
<dbReference type="GO" id="GO:0003958">
    <property type="term" value="F:NADPH-hemoprotein reductase activity"/>
    <property type="evidence" value="ECO:0007669"/>
    <property type="project" value="UniProtKB-UniRule"/>
</dbReference>
<dbReference type="CDD" id="cd06204">
    <property type="entry name" value="CYPOR"/>
    <property type="match status" value="1"/>
</dbReference>
<dbReference type="FunFam" id="1.20.990.10:FF:000003">
    <property type="entry name" value="NADPH--cytochrome P450 reductase"/>
    <property type="match status" value="1"/>
</dbReference>
<dbReference type="FunFam" id="3.40.50.360:FF:000023">
    <property type="entry name" value="NADPH--cytochrome P450 reductase"/>
    <property type="match status" value="1"/>
</dbReference>
<dbReference type="FunFam" id="3.40.50.80:FF:000001">
    <property type="entry name" value="NADPH--cytochrome P450 reductase 1"/>
    <property type="match status" value="1"/>
</dbReference>
<dbReference type="Gene3D" id="3.40.50.360">
    <property type="match status" value="1"/>
</dbReference>
<dbReference type="Gene3D" id="1.20.990.10">
    <property type="entry name" value="NADPH-cytochrome p450 Reductase, Chain A, domain 3"/>
    <property type="match status" value="1"/>
</dbReference>
<dbReference type="Gene3D" id="3.40.50.80">
    <property type="entry name" value="Nucleotide-binding domain of ferredoxin-NADP reductase (FNR) module"/>
    <property type="match status" value="1"/>
</dbReference>
<dbReference type="Gene3D" id="2.40.30.10">
    <property type="entry name" value="Translation factors"/>
    <property type="match status" value="1"/>
</dbReference>
<dbReference type="HAMAP" id="MF_03212">
    <property type="entry name" value="NCPR"/>
    <property type="match status" value="1"/>
</dbReference>
<dbReference type="InterPro" id="IPR003097">
    <property type="entry name" value="CysJ-like_FAD-binding"/>
</dbReference>
<dbReference type="InterPro" id="IPR017927">
    <property type="entry name" value="FAD-bd_FR_type"/>
</dbReference>
<dbReference type="InterPro" id="IPR001094">
    <property type="entry name" value="Flavdoxin-like"/>
</dbReference>
<dbReference type="InterPro" id="IPR008254">
    <property type="entry name" value="Flavodoxin/NO_synth"/>
</dbReference>
<dbReference type="InterPro" id="IPR001709">
    <property type="entry name" value="Flavoprot_Pyr_Nucl_cyt_Rdtase"/>
</dbReference>
<dbReference type="InterPro" id="IPR029039">
    <property type="entry name" value="Flavoprotein-like_sf"/>
</dbReference>
<dbReference type="InterPro" id="IPR039261">
    <property type="entry name" value="FNR_nucleotide-bd"/>
</dbReference>
<dbReference type="InterPro" id="IPR023173">
    <property type="entry name" value="NADPH_Cyt_P450_Rdtase_alpha"/>
</dbReference>
<dbReference type="InterPro" id="IPR001433">
    <property type="entry name" value="OxRdtase_FAD/NAD-bd"/>
</dbReference>
<dbReference type="InterPro" id="IPR023208">
    <property type="entry name" value="P450R"/>
</dbReference>
<dbReference type="InterPro" id="IPR017938">
    <property type="entry name" value="Riboflavin_synthase-like_b-brl"/>
</dbReference>
<dbReference type="PANTHER" id="PTHR19384:SF111">
    <property type="entry name" value="NADPH--CYTOCHROME P450 REDUCTASE 1"/>
    <property type="match status" value="1"/>
</dbReference>
<dbReference type="PANTHER" id="PTHR19384">
    <property type="entry name" value="NITRIC OXIDE SYNTHASE-RELATED"/>
    <property type="match status" value="1"/>
</dbReference>
<dbReference type="Pfam" id="PF00667">
    <property type="entry name" value="FAD_binding_1"/>
    <property type="match status" value="1"/>
</dbReference>
<dbReference type="Pfam" id="PF00258">
    <property type="entry name" value="Flavodoxin_1"/>
    <property type="match status" value="1"/>
</dbReference>
<dbReference type="Pfam" id="PF00175">
    <property type="entry name" value="NAD_binding_1"/>
    <property type="match status" value="1"/>
</dbReference>
<dbReference type="PIRSF" id="PIRSF000208">
    <property type="entry name" value="P450R"/>
    <property type="match status" value="1"/>
</dbReference>
<dbReference type="PRINTS" id="PR00369">
    <property type="entry name" value="FLAVODOXIN"/>
</dbReference>
<dbReference type="PRINTS" id="PR00371">
    <property type="entry name" value="FPNCR"/>
</dbReference>
<dbReference type="SUPFAM" id="SSF52343">
    <property type="entry name" value="Ferredoxin reductase-like, C-terminal NADP-linked domain"/>
    <property type="match status" value="1"/>
</dbReference>
<dbReference type="SUPFAM" id="SSF52218">
    <property type="entry name" value="Flavoproteins"/>
    <property type="match status" value="1"/>
</dbReference>
<dbReference type="SUPFAM" id="SSF63380">
    <property type="entry name" value="Riboflavin synthase domain-like"/>
    <property type="match status" value="1"/>
</dbReference>
<dbReference type="PROSITE" id="PS51384">
    <property type="entry name" value="FAD_FR"/>
    <property type="match status" value="1"/>
</dbReference>
<dbReference type="PROSITE" id="PS50902">
    <property type="entry name" value="FLAVODOXIN_LIKE"/>
    <property type="match status" value="1"/>
</dbReference>